<sequence>MTNIRKTHPLMKILNDAFIDLPTPPNISSWWNFGSLLGLCLIMQILTGLFLAMHYTPDTSTAFSSVAHICRDVNYGWFIRYLHANGASMFFICLYAHIGRGLYYGSYMFQETWNIGVLLLLAVMATAFVGYVLPWGQMSFWGATVITNLLSAIPYIGTTLVEWIWGGFSVDKATLTRFFAFHFILPFIITALAAVHLLFLHETGSNNPTGIPSNMDMIPFHPYYTIKDILGALLLILTLLALTLFTPDLLGDPDNYTPANPLSTPAHIKPEWYFLFAYAILRSIPNKLGGVLALLLSILVLIFIPMLQTSKQRSMMFRPFSQLLFWTLIADLLTLTWIGGQPVEHPYIIVGQLASILYFLLILVLMPTAGLIENKLLKW</sequence>
<name>CYB_TURAD</name>
<proteinExistence type="inferred from homology"/>
<dbReference type="EMBL" id="AF084091">
    <property type="protein sequence ID" value="AAD54468.1"/>
    <property type="molecule type" value="Genomic_DNA"/>
</dbReference>
<dbReference type="EMBL" id="AF084092">
    <property type="protein sequence ID" value="AAD54469.1"/>
    <property type="molecule type" value="Genomic_DNA"/>
</dbReference>
<dbReference type="RefSeq" id="YP_002587059.1">
    <property type="nucleotide sequence ID" value="NC_012058.1"/>
</dbReference>
<dbReference type="SMR" id="Q9TDK1"/>
<dbReference type="GeneID" id="7411807"/>
<dbReference type="CTD" id="4519"/>
<dbReference type="GO" id="GO:0005743">
    <property type="term" value="C:mitochondrial inner membrane"/>
    <property type="evidence" value="ECO:0007669"/>
    <property type="project" value="UniProtKB-SubCell"/>
</dbReference>
<dbReference type="GO" id="GO:0045275">
    <property type="term" value="C:respiratory chain complex III"/>
    <property type="evidence" value="ECO:0007669"/>
    <property type="project" value="InterPro"/>
</dbReference>
<dbReference type="GO" id="GO:0046872">
    <property type="term" value="F:metal ion binding"/>
    <property type="evidence" value="ECO:0007669"/>
    <property type="project" value="UniProtKB-KW"/>
</dbReference>
<dbReference type="GO" id="GO:0008121">
    <property type="term" value="F:ubiquinol-cytochrome-c reductase activity"/>
    <property type="evidence" value="ECO:0007669"/>
    <property type="project" value="InterPro"/>
</dbReference>
<dbReference type="GO" id="GO:0006122">
    <property type="term" value="P:mitochondrial electron transport, ubiquinol to cytochrome c"/>
    <property type="evidence" value="ECO:0007669"/>
    <property type="project" value="TreeGrafter"/>
</dbReference>
<dbReference type="CDD" id="cd00290">
    <property type="entry name" value="cytochrome_b_C"/>
    <property type="match status" value="1"/>
</dbReference>
<dbReference type="CDD" id="cd00284">
    <property type="entry name" value="Cytochrome_b_N"/>
    <property type="match status" value="1"/>
</dbReference>
<dbReference type="FunFam" id="1.20.810.10:FF:000002">
    <property type="entry name" value="Cytochrome b"/>
    <property type="match status" value="1"/>
</dbReference>
<dbReference type="Gene3D" id="1.20.810.10">
    <property type="entry name" value="Cytochrome Bc1 Complex, Chain C"/>
    <property type="match status" value="1"/>
</dbReference>
<dbReference type="InterPro" id="IPR005798">
    <property type="entry name" value="Cyt_b/b6_C"/>
</dbReference>
<dbReference type="InterPro" id="IPR036150">
    <property type="entry name" value="Cyt_b/b6_C_sf"/>
</dbReference>
<dbReference type="InterPro" id="IPR005797">
    <property type="entry name" value="Cyt_b/b6_N"/>
</dbReference>
<dbReference type="InterPro" id="IPR027387">
    <property type="entry name" value="Cytb/b6-like_sf"/>
</dbReference>
<dbReference type="InterPro" id="IPR030689">
    <property type="entry name" value="Cytochrome_b"/>
</dbReference>
<dbReference type="InterPro" id="IPR048260">
    <property type="entry name" value="Cytochrome_b_C_euk/bac"/>
</dbReference>
<dbReference type="InterPro" id="IPR048259">
    <property type="entry name" value="Cytochrome_b_N_euk/bac"/>
</dbReference>
<dbReference type="InterPro" id="IPR016174">
    <property type="entry name" value="Di-haem_cyt_TM"/>
</dbReference>
<dbReference type="PANTHER" id="PTHR19271">
    <property type="entry name" value="CYTOCHROME B"/>
    <property type="match status" value="1"/>
</dbReference>
<dbReference type="PANTHER" id="PTHR19271:SF16">
    <property type="entry name" value="CYTOCHROME B"/>
    <property type="match status" value="1"/>
</dbReference>
<dbReference type="Pfam" id="PF00032">
    <property type="entry name" value="Cytochrom_B_C"/>
    <property type="match status" value="1"/>
</dbReference>
<dbReference type="Pfam" id="PF00033">
    <property type="entry name" value="Cytochrome_B"/>
    <property type="match status" value="1"/>
</dbReference>
<dbReference type="PIRSF" id="PIRSF038885">
    <property type="entry name" value="COB"/>
    <property type="match status" value="1"/>
</dbReference>
<dbReference type="SUPFAM" id="SSF81648">
    <property type="entry name" value="a domain/subunit of cytochrome bc1 complex (Ubiquinol-cytochrome c reductase)"/>
    <property type="match status" value="1"/>
</dbReference>
<dbReference type="SUPFAM" id="SSF81342">
    <property type="entry name" value="Transmembrane di-heme cytochromes"/>
    <property type="match status" value="1"/>
</dbReference>
<dbReference type="PROSITE" id="PS51003">
    <property type="entry name" value="CYTB_CTER"/>
    <property type="match status" value="1"/>
</dbReference>
<dbReference type="PROSITE" id="PS51002">
    <property type="entry name" value="CYTB_NTER"/>
    <property type="match status" value="1"/>
</dbReference>
<comment type="function">
    <text evidence="2">Component of the ubiquinol-cytochrome c reductase complex (complex III or cytochrome b-c1 complex) that is part of the mitochondrial respiratory chain. The b-c1 complex mediates electron transfer from ubiquinol to cytochrome c. Contributes to the generation of a proton gradient across the mitochondrial membrane that is then used for ATP synthesis.</text>
</comment>
<comment type="cofactor">
    <cofactor evidence="2">
        <name>heme b</name>
        <dbReference type="ChEBI" id="CHEBI:60344"/>
    </cofactor>
    <text evidence="2">Binds 2 heme b groups non-covalently.</text>
</comment>
<comment type="subunit">
    <text evidence="2">The cytochrome bc1 complex contains 11 subunits: 3 respiratory subunits (MT-CYB, CYC1 and UQCRFS1), 2 core proteins (UQCRC1 and UQCRC2) and 6 low-molecular weight proteins (UQCRH/QCR6, UQCRB/QCR7, UQCRQ/QCR8, UQCR10/QCR9, UQCR11/QCR10 and a cleavage product of UQCRFS1). This cytochrome bc1 complex then forms a dimer.</text>
</comment>
<comment type="subcellular location">
    <subcellularLocation>
        <location evidence="2">Mitochondrion inner membrane</location>
        <topology evidence="2">Multi-pass membrane protein</topology>
    </subcellularLocation>
</comment>
<comment type="miscellaneous">
    <text evidence="1">Heme 1 (or BL or b562) is low-potential and absorbs at about 562 nm, and heme 2 (or BH or b566) is high-potential and absorbs at about 566 nm.</text>
</comment>
<comment type="similarity">
    <text evidence="3 4">Belongs to the cytochrome b family.</text>
</comment>
<comment type="caution">
    <text evidence="2">The full-length protein contains only eight transmembrane helices, not nine as predicted by bioinformatics tools.</text>
</comment>
<evidence type="ECO:0000250" key="1"/>
<evidence type="ECO:0000250" key="2">
    <source>
        <dbReference type="UniProtKB" id="P00157"/>
    </source>
</evidence>
<evidence type="ECO:0000255" key="3">
    <source>
        <dbReference type="PROSITE-ProRule" id="PRU00967"/>
    </source>
</evidence>
<evidence type="ECO:0000255" key="4">
    <source>
        <dbReference type="PROSITE-ProRule" id="PRU00968"/>
    </source>
</evidence>
<keyword id="KW-0249">Electron transport</keyword>
<keyword id="KW-0349">Heme</keyword>
<keyword id="KW-0408">Iron</keyword>
<keyword id="KW-0472">Membrane</keyword>
<keyword id="KW-0479">Metal-binding</keyword>
<keyword id="KW-0496">Mitochondrion</keyword>
<keyword id="KW-0999">Mitochondrion inner membrane</keyword>
<keyword id="KW-0679">Respiratory chain</keyword>
<keyword id="KW-0812">Transmembrane</keyword>
<keyword id="KW-1133">Transmembrane helix</keyword>
<keyword id="KW-0813">Transport</keyword>
<keyword id="KW-0830">Ubiquinone</keyword>
<accession>Q9TDK1</accession>
<accession>Q9TDK0</accession>
<organism>
    <name type="scientific">Tursiops aduncus</name>
    <name type="common">Indo-pacific bottle-nosed dolphin</name>
    <name type="synonym">Delphinus aduncus</name>
    <dbReference type="NCBI Taxonomy" id="79784"/>
    <lineage>
        <taxon>Eukaryota</taxon>
        <taxon>Metazoa</taxon>
        <taxon>Chordata</taxon>
        <taxon>Craniata</taxon>
        <taxon>Vertebrata</taxon>
        <taxon>Euteleostomi</taxon>
        <taxon>Mammalia</taxon>
        <taxon>Eutheria</taxon>
        <taxon>Laurasiatheria</taxon>
        <taxon>Artiodactyla</taxon>
        <taxon>Whippomorpha</taxon>
        <taxon>Cetacea</taxon>
        <taxon>Odontoceti</taxon>
        <taxon>Delphinidae</taxon>
        <taxon>Tursiops</taxon>
    </lineage>
</organism>
<geneLocation type="mitochondrion"/>
<reference key="1">
    <citation type="journal article" date="1999" name="Mar. Mamm. Sci.">
        <title>Phylogenetic relationships among the delphinid cetaceans based on full cytochrome b sequences.</title>
        <authorList>
            <person name="LeDuc R.G."/>
            <person name="Perrin W.F."/>
            <person name="Dizon A.E."/>
        </authorList>
    </citation>
    <scope>NUCLEOTIDE SEQUENCE [GENOMIC DNA]</scope>
    <source>
        <strain>Isolate South Africa</strain>
    </source>
</reference>
<feature type="chain" id="PRO_0000061692" description="Cytochrome b">
    <location>
        <begin position="1"/>
        <end position="379"/>
    </location>
</feature>
<feature type="transmembrane region" description="Helical" evidence="2">
    <location>
        <begin position="33"/>
        <end position="53"/>
    </location>
</feature>
<feature type="transmembrane region" description="Helical" evidence="2">
    <location>
        <begin position="77"/>
        <end position="98"/>
    </location>
</feature>
<feature type="transmembrane region" description="Helical" evidence="2">
    <location>
        <begin position="113"/>
        <end position="133"/>
    </location>
</feature>
<feature type="transmembrane region" description="Helical" evidence="2">
    <location>
        <begin position="178"/>
        <end position="198"/>
    </location>
</feature>
<feature type="transmembrane region" description="Helical" evidence="2">
    <location>
        <begin position="226"/>
        <end position="246"/>
    </location>
</feature>
<feature type="transmembrane region" description="Helical" evidence="2">
    <location>
        <begin position="288"/>
        <end position="308"/>
    </location>
</feature>
<feature type="transmembrane region" description="Helical" evidence="2">
    <location>
        <begin position="320"/>
        <end position="340"/>
    </location>
</feature>
<feature type="transmembrane region" description="Helical" evidence="2">
    <location>
        <begin position="347"/>
        <end position="367"/>
    </location>
</feature>
<feature type="binding site" description="axial binding residue" evidence="2">
    <location>
        <position position="83"/>
    </location>
    <ligand>
        <name>heme b</name>
        <dbReference type="ChEBI" id="CHEBI:60344"/>
        <label>b562</label>
    </ligand>
    <ligandPart>
        <name>Fe</name>
        <dbReference type="ChEBI" id="CHEBI:18248"/>
    </ligandPart>
</feature>
<feature type="binding site" description="axial binding residue" evidence="2">
    <location>
        <position position="97"/>
    </location>
    <ligand>
        <name>heme b</name>
        <dbReference type="ChEBI" id="CHEBI:60344"/>
        <label>b566</label>
    </ligand>
    <ligandPart>
        <name>Fe</name>
        <dbReference type="ChEBI" id="CHEBI:18248"/>
    </ligandPart>
</feature>
<feature type="binding site" description="axial binding residue" evidence="2">
    <location>
        <position position="182"/>
    </location>
    <ligand>
        <name>heme b</name>
        <dbReference type="ChEBI" id="CHEBI:60344"/>
        <label>b562</label>
    </ligand>
    <ligandPart>
        <name>Fe</name>
        <dbReference type="ChEBI" id="CHEBI:18248"/>
    </ligandPart>
</feature>
<feature type="binding site" description="axial binding residue" evidence="2">
    <location>
        <position position="196"/>
    </location>
    <ligand>
        <name>heme b</name>
        <dbReference type="ChEBI" id="CHEBI:60344"/>
        <label>b566</label>
    </ligand>
    <ligandPart>
        <name>Fe</name>
        <dbReference type="ChEBI" id="CHEBI:18248"/>
    </ligandPart>
</feature>
<feature type="binding site" evidence="2">
    <location>
        <position position="201"/>
    </location>
    <ligand>
        <name>a ubiquinone</name>
        <dbReference type="ChEBI" id="CHEBI:16389"/>
    </ligand>
</feature>
<feature type="sequence variant" description="In strain: Isolate South Africa.">
    <original>P</original>
    <variation>S</variation>
    <location>
        <position position="25"/>
    </location>
</feature>
<feature type="sequence variant" description="In strain: Isolate South Africa.">
    <original>I</original>
    <variation>V</variation>
    <location>
        <position position="188"/>
    </location>
</feature>
<feature type="sequence variant" description="In strain: Isolate South Africa.">
    <original>D</original>
    <variation>N</variation>
    <location>
        <position position="252"/>
    </location>
</feature>
<feature type="sequence variant" description="In strain: Isolate South Africa.">
    <original>T</original>
    <variation>I</variation>
    <location>
        <position position="257"/>
    </location>
</feature>
<gene>
    <name type="primary">MT-CYB</name>
    <name type="synonym">COB</name>
    <name type="synonym">CYTB</name>
    <name type="synonym">MTCYB</name>
</gene>
<protein>
    <recommendedName>
        <fullName>Cytochrome b</fullName>
    </recommendedName>
    <alternativeName>
        <fullName>Complex III subunit 3</fullName>
    </alternativeName>
    <alternativeName>
        <fullName>Complex III subunit III</fullName>
    </alternativeName>
    <alternativeName>
        <fullName>Cytochrome b-c1 complex subunit 3</fullName>
    </alternativeName>
    <alternativeName>
        <fullName>Ubiquinol-cytochrome-c reductase complex cytochrome b subunit</fullName>
    </alternativeName>
</protein>